<proteinExistence type="inferred from homology"/>
<protein>
    <recommendedName>
        <fullName evidence="1">Protoheme IX farnesyltransferase</fullName>
        <ecNumber evidence="1">2.5.1.141</ecNumber>
    </recommendedName>
    <alternativeName>
        <fullName evidence="1">Heme B farnesyltransferase</fullName>
    </alternativeName>
    <alternativeName>
        <fullName evidence="1">Heme O synthase</fullName>
    </alternativeName>
</protein>
<evidence type="ECO:0000255" key="1">
    <source>
        <dbReference type="HAMAP-Rule" id="MF_00154"/>
    </source>
</evidence>
<name>COXX_RHIEC</name>
<sequence>MTVIDNHEALAEDGEMSEASARDYFELLKPRVMSLVVFTAFAGLVLAPGHINPVLGLIAILCIAVGAGASGALNMWYDADIDAIMSRTAKRPIPAGRIAPSEALAFGLVLSGFSVVILGLAVNWLSAAILAFTIFFYAVIYTMWLKRSTPQNIVIGGAAGAFPPMIGWACVTNSVTIESTVLFLIIFLWTPAHFWALALFKMRDYEAVGVPMLPNVSGERVTKHQIVAYAVLTAICAVLPSFLGFASFGYGLVAAALGAIFVYCSIAVWRMPDGDLKMIPAKKLFAFSIFYLFAVFSALMIDRLAAILVSQAGGSF</sequence>
<feature type="chain" id="PRO_0000327129" description="Protoheme IX farnesyltransferase">
    <location>
        <begin position="1"/>
        <end position="316"/>
    </location>
</feature>
<feature type="transmembrane region" description="Helical" evidence="1">
    <location>
        <begin position="32"/>
        <end position="52"/>
    </location>
</feature>
<feature type="transmembrane region" description="Helical" evidence="1">
    <location>
        <begin position="53"/>
        <end position="73"/>
    </location>
</feature>
<feature type="transmembrane region" description="Helical" evidence="1">
    <location>
        <begin position="93"/>
        <end position="113"/>
    </location>
</feature>
<feature type="transmembrane region" description="Helical" evidence="1">
    <location>
        <begin position="116"/>
        <end position="136"/>
    </location>
</feature>
<feature type="transmembrane region" description="Helical" evidence="1">
    <location>
        <begin position="152"/>
        <end position="172"/>
    </location>
</feature>
<feature type="transmembrane region" description="Helical" evidence="1">
    <location>
        <begin position="180"/>
        <end position="200"/>
    </location>
</feature>
<feature type="transmembrane region" description="Helical" evidence="1">
    <location>
        <begin position="221"/>
        <end position="241"/>
    </location>
</feature>
<feature type="transmembrane region" description="Helical" evidence="1">
    <location>
        <begin position="252"/>
        <end position="271"/>
    </location>
</feature>
<feature type="transmembrane region" description="Helical" evidence="1">
    <location>
        <begin position="289"/>
        <end position="309"/>
    </location>
</feature>
<comment type="function">
    <text evidence="1">Converts heme B (protoheme IX) to heme O by substitution of the vinyl group on carbon 2 of heme B porphyrin ring with a hydroxyethyl farnesyl side group.</text>
</comment>
<comment type="catalytic activity">
    <reaction evidence="1">
        <text>heme b + (2E,6E)-farnesyl diphosphate + H2O = Fe(II)-heme o + diphosphate</text>
        <dbReference type="Rhea" id="RHEA:28070"/>
        <dbReference type="ChEBI" id="CHEBI:15377"/>
        <dbReference type="ChEBI" id="CHEBI:33019"/>
        <dbReference type="ChEBI" id="CHEBI:60344"/>
        <dbReference type="ChEBI" id="CHEBI:60530"/>
        <dbReference type="ChEBI" id="CHEBI:175763"/>
        <dbReference type="EC" id="2.5.1.141"/>
    </reaction>
</comment>
<comment type="pathway">
    <text evidence="1">Porphyrin-containing compound metabolism; heme O biosynthesis; heme O from protoheme: step 1/1.</text>
</comment>
<comment type="subcellular location">
    <subcellularLocation>
        <location evidence="1">Cell inner membrane</location>
        <topology evidence="1">Multi-pass membrane protein</topology>
    </subcellularLocation>
</comment>
<comment type="miscellaneous">
    <text evidence="1">Carbon 2 of the heme B porphyrin ring is defined according to the Fischer nomenclature.</text>
</comment>
<comment type="similarity">
    <text evidence="1">Belongs to the UbiA prenyltransferase family. Protoheme IX farnesyltransferase subfamily.</text>
</comment>
<accession>Q2KBM1</accession>
<dbReference type="EC" id="2.5.1.141" evidence="1"/>
<dbReference type="EMBL" id="CP000133">
    <property type="protein sequence ID" value="ABC89765.1"/>
    <property type="molecule type" value="Genomic_DNA"/>
</dbReference>
<dbReference type="RefSeq" id="WP_011424301.1">
    <property type="nucleotide sequence ID" value="NC_007761.1"/>
</dbReference>
<dbReference type="SMR" id="Q2KBM1"/>
<dbReference type="KEGG" id="ret:RHE_CH00954"/>
<dbReference type="eggNOG" id="COG0109">
    <property type="taxonomic scope" value="Bacteria"/>
</dbReference>
<dbReference type="HOGENOM" id="CLU_029631_0_2_5"/>
<dbReference type="OrthoDB" id="9814417at2"/>
<dbReference type="UniPathway" id="UPA00834">
    <property type="reaction ID" value="UER00712"/>
</dbReference>
<dbReference type="Proteomes" id="UP000001936">
    <property type="component" value="Chromosome"/>
</dbReference>
<dbReference type="GO" id="GO:0005886">
    <property type="term" value="C:plasma membrane"/>
    <property type="evidence" value="ECO:0007669"/>
    <property type="project" value="UniProtKB-SubCell"/>
</dbReference>
<dbReference type="GO" id="GO:0008495">
    <property type="term" value="F:protoheme IX farnesyltransferase activity"/>
    <property type="evidence" value="ECO:0007669"/>
    <property type="project" value="UniProtKB-UniRule"/>
</dbReference>
<dbReference type="GO" id="GO:0048034">
    <property type="term" value="P:heme O biosynthetic process"/>
    <property type="evidence" value="ECO:0007669"/>
    <property type="project" value="UniProtKB-UniRule"/>
</dbReference>
<dbReference type="CDD" id="cd13957">
    <property type="entry name" value="PT_UbiA_Cox10"/>
    <property type="match status" value="1"/>
</dbReference>
<dbReference type="FunFam" id="1.10.357.140:FF:000001">
    <property type="entry name" value="Protoheme IX farnesyltransferase"/>
    <property type="match status" value="1"/>
</dbReference>
<dbReference type="Gene3D" id="1.10.357.140">
    <property type="entry name" value="UbiA prenyltransferase"/>
    <property type="match status" value="1"/>
</dbReference>
<dbReference type="HAMAP" id="MF_00154">
    <property type="entry name" value="CyoE_CtaB"/>
    <property type="match status" value="1"/>
</dbReference>
<dbReference type="InterPro" id="IPR006369">
    <property type="entry name" value="Protohaem_IX_farnesylTrfase"/>
</dbReference>
<dbReference type="InterPro" id="IPR000537">
    <property type="entry name" value="UbiA_prenyltransferase"/>
</dbReference>
<dbReference type="InterPro" id="IPR030470">
    <property type="entry name" value="UbiA_prenylTrfase_CS"/>
</dbReference>
<dbReference type="InterPro" id="IPR044878">
    <property type="entry name" value="UbiA_sf"/>
</dbReference>
<dbReference type="NCBIfam" id="TIGR01473">
    <property type="entry name" value="cyoE_ctaB"/>
    <property type="match status" value="1"/>
</dbReference>
<dbReference type="NCBIfam" id="NF003349">
    <property type="entry name" value="PRK04375.1-2"/>
    <property type="match status" value="1"/>
</dbReference>
<dbReference type="PANTHER" id="PTHR43448:SF7">
    <property type="entry name" value="4-HYDROXYBENZOATE SOLANESYLTRANSFERASE"/>
    <property type="match status" value="1"/>
</dbReference>
<dbReference type="PANTHER" id="PTHR43448">
    <property type="entry name" value="PROTOHEME IX FARNESYLTRANSFERASE, MITOCHONDRIAL"/>
    <property type="match status" value="1"/>
</dbReference>
<dbReference type="Pfam" id="PF01040">
    <property type="entry name" value="UbiA"/>
    <property type="match status" value="1"/>
</dbReference>
<dbReference type="PROSITE" id="PS00943">
    <property type="entry name" value="UBIA"/>
    <property type="match status" value="1"/>
</dbReference>
<reference key="1">
    <citation type="journal article" date="2006" name="Proc. Natl. Acad. Sci. U.S.A.">
        <title>The partitioned Rhizobium etli genome: genetic and metabolic redundancy in seven interacting replicons.</title>
        <authorList>
            <person name="Gonzalez V."/>
            <person name="Santamaria R.I."/>
            <person name="Bustos P."/>
            <person name="Hernandez-Gonzalez I."/>
            <person name="Medrano-Soto A."/>
            <person name="Moreno-Hagelsieb G."/>
            <person name="Janga S.C."/>
            <person name="Ramirez M.A."/>
            <person name="Jimenez-Jacinto V."/>
            <person name="Collado-Vides J."/>
            <person name="Davila G."/>
        </authorList>
    </citation>
    <scope>NUCLEOTIDE SEQUENCE [LARGE SCALE GENOMIC DNA]</scope>
    <source>
        <strain>ATCC 51251 / DSM 11541 / JCM 21823 / NBRC 15573 / CFN 42</strain>
    </source>
</reference>
<organism>
    <name type="scientific">Rhizobium etli (strain ATCC 51251 / DSM 11541 / JCM 21823 / NBRC 15573 / CFN 42)</name>
    <dbReference type="NCBI Taxonomy" id="347834"/>
    <lineage>
        <taxon>Bacteria</taxon>
        <taxon>Pseudomonadati</taxon>
        <taxon>Pseudomonadota</taxon>
        <taxon>Alphaproteobacteria</taxon>
        <taxon>Hyphomicrobiales</taxon>
        <taxon>Rhizobiaceae</taxon>
        <taxon>Rhizobium/Agrobacterium group</taxon>
        <taxon>Rhizobium</taxon>
    </lineage>
</organism>
<keyword id="KW-0997">Cell inner membrane</keyword>
<keyword id="KW-1003">Cell membrane</keyword>
<keyword id="KW-0350">Heme biosynthesis</keyword>
<keyword id="KW-0472">Membrane</keyword>
<keyword id="KW-1185">Reference proteome</keyword>
<keyword id="KW-0808">Transferase</keyword>
<keyword id="KW-0812">Transmembrane</keyword>
<keyword id="KW-1133">Transmembrane helix</keyword>
<gene>
    <name evidence="1" type="primary">ctaB</name>
    <name type="ordered locus">RHE_CH00954</name>
</gene>